<name>STPAP_RAT</name>
<comment type="function">
    <text evidence="2">Poly(A) polymerase that creates the 3'-poly(A) tail of specific pre-mRNAs. Localizes to nuclear speckles together with PIP5K1A and mediates polyadenylation of a select set of mRNAs, such as HMOX1. In addition to polyadenylation, it is also required for the 3'-end cleavage of pre-mRNAs: binds to the 3'UTR of targeted pre-mRNAs and promotes the recruitment and assembly of the CPSF complex on the 3'UTR of pre-mRNAs. In addition to adenylyltransferase activity, also has uridylyltransferase activity. However, the ATP ratio is higher than UTP in cells, suggesting that it functions primarily as a poly(A) polymerase. Acts as a specific terminal uridylyltransferase for U6 snRNA in vitro: responsible for a controlled elongation reaction that results in the restoration of the four 3'-terminal UMP-residues found in newly transcribed U6 snRNA. Not involved in replication-dependent histone mRNA degradation.</text>
</comment>
<comment type="catalytic activity">
    <reaction evidence="2">
        <text>RNA(n) + UTP = RNA(n)-3'-uridine ribonucleotide + diphosphate</text>
        <dbReference type="Rhea" id="RHEA:14785"/>
        <dbReference type="Rhea" id="RHEA-COMP:14527"/>
        <dbReference type="Rhea" id="RHEA-COMP:17348"/>
        <dbReference type="ChEBI" id="CHEBI:33019"/>
        <dbReference type="ChEBI" id="CHEBI:46398"/>
        <dbReference type="ChEBI" id="CHEBI:140395"/>
        <dbReference type="ChEBI" id="CHEBI:173116"/>
        <dbReference type="EC" id="2.7.7.52"/>
    </reaction>
</comment>
<comment type="catalytic activity">
    <reaction evidence="2">
        <text>RNA(n) + ATP = RNA(n)-3'-adenine ribonucleotide + diphosphate</text>
        <dbReference type="Rhea" id="RHEA:11332"/>
        <dbReference type="Rhea" id="RHEA-COMP:14527"/>
        <dbReference type="Rhea" id="RHEA-COMP:17347"/>
        <dbReference type="ChEBI" id="CHEBI:30616"/>
        <dbReference type="ChEBI" id="CHEBI:33019"/>
        <dbReference type="ChEBI" id="CHEBI:140395"/>
        <dbReference type="ChEBI" id="CHEBI:173115"/>
        <dbReference type="EC" id="2.7.7.19"/>
    </reaction>
</comment>
<comment type="cofactor">
    <cofactor evidence="2">
        <name>Mg(2+)</name>
        <dbReference type="ChEBI" id="CHEBI:18420"/>
    </cofactor>
    <cofactor evidence="3">
        <name>Mn(2+)</name>
        <dbReference type="ChEBI" id="CHEBI:29035"/>
    </cofactor>
    <text evidence="2">Binds 1 divalent cation per subunit.</text>
</comment>
<comment type="activity regulation">
    <text evidence="2">Adenylyltransferase activity is specifically phosphatidylinositol 4,5-bisphosphate (PtdIns(4,5)P2).</text>
</comment>
<comment type="subunit">
    <text evidence="2">Associates with the cleavage and polyadenylation specificity factor (CPSF) complex. Interacts with CPSF1 and CPSF3; the interaction is direct. Interacts with PIP5K1A.</text>
</comment>
<comment type="subcellular location">
    <subcellularLocation>
        <location evidence="2">Nucleus</location>
        <location evidence="2">Nucleolus</location>
    </subcellularLocation>
    <subcellularLocation>
        <location evidence="2">Nucleus speckle</location>
    </subcellularLocation>
</comment>
<comment type="domain">
    <text evidence="2">The zinc-finger domain is required for terminal uridylyltransferase activity. Together with the RRM domain, binds the 5'-area of U6 snRNA.</text>
</comment>
<comment type="domain">
    <text evidence="2">The RRM domain is required for terminal uridylyltransferase activity. Together with the zinc-finger domain, binds the 5'-area of U6 snRNA.</text>
</comment>
<comment type="domain">
    <text evidence="2">The proline-rich region is dispensable for terminal uridylyltransferase activity.</text>
</comment>
<comment type="PTM">
    <text evidence="2">Phosphorylated by CK1 in the proline-rich (Pro-rich) region.</text>
</comment>
<comment type="similarity">
    <text evidence="8">Belongs to the DNA polymerase type-B-like family.</text>
</comment>
<protein>
    <recommendedName>
        <fullName>Speckle targeted PIP5K1A-regulated poly(A) polymerase</fullName>
        <shortName>Star-PAP</shortName>
        <ecNumber evidence="2">2.7.7.19</ecNumber>
    </recommendedName>
    <alternativeName>
        <fullName>RNA-binding motif protein 21</fullName>
        <shortName>RNA-binding protein 21</shortName>
    </alternativeName>
    <alternativeName>
        <fullName>U6 snRNA-specific terminal uridylyltransferase 1</fullName>
        <shortName>U6-TUTase</shortName>
        <ecNumber evidence="2">2.7.7.52</ecNumber>
    </alternativeName>
</protein>
<accession>Q3MHT4</accession>
<dbReference type="EC" id="2.7.7.19" evidence="2"/>
<dbReference type="EC" id="2.7.7.52" evidence="2"/>
<dbReference type="EMBL" id="BC104695">
    <property type="protein sequence ID" value="AAI04696.1"/>
    <property type="molecule type" value="mRNA"/>
</dbReference>
<dbReference type="RefSeq" id="NP_001029073.1">
    <property type="nucleotide sequence ID" value="NM_001033901.1"/>
</dbReference>
<dbReference type="SMR" id="Q3MHT4"/>
<dbReference type="BioGRID" id="270623">
    <property type="interactions" value="1"/>
</dbReference>
<dbReference type="FunCoup" id="Q3MHT4">
    <property type="interactions" value="2680"/>
</dbReference>
<dbReference type="IntAct" id="Q3MHT4">
    <property type="interactions" value="1"/>
</dbReference>
<dbReference type="STRING" id="10116.ENSRNOP00000027187"/>
<dbReference type="GlyGen" id="Q3MHT4">
    <property type="glycosylation" value="1 site"/>
</dbReference>
<dbReference type="iPTMnet" id="Q3MHT4"/>
<dbReference type="PhosphoSitePlus" id="Q3MHT4"/>
<dbReference type="PaxDb" id="10116-ENSRNOP00000027187"/>
<dbReference type="Ensembl" id="ENSRNOT00000027187.7">
    <property type="protein sequence ID" value="ENSRNOP00000027187.3"/>
    <property type="gene ID" value="ENSRNOG00000020047.7"/>
</dbReference>
<dbReference type="GeneID" id="499314"/>
<dbReference type="KEGG" id="rno:499314"/>
<dbReference type="UCSC" id="RGD:1561043">
    <property type="organism name" value="rat"/>
</dbReference>
<dbReference type="AGR" id="RGD:1561043"/>
<dbReference type="CTD" id="64852"/>
<dbReference type="RGD" id="1561043">
    <property type="gene designation" value="Tut1"/>
</dbReference>
<dbReference type="eggNOG" id="KOG2277">
    <property type="taxonomic scope" value="Eukaryota"/>
</dbReference>
<dbReference type="GeneTree" id="ENSGT00940000159914"/>
<dbReference type="HOGENOM" id="CLU_018757_1_0_1"/>
<dbReference type="InParanoid" id="Q3MHT4"/>
<dbReference type="OMA" id="QDWAMQG"/>
<dbReference type="OrthoDB" id="66421at9989"/>
<dbReference type="PhylomeDB" id="Q3MHT4"/>
<dbReference type="TreeFam" id="TF354308"/>
<dbReference type="PRO" id="PR:Q3MHT4"/>
<dbReference type="Proteomes" id="UP000002494">
    <property type="component" value="Chromosome 1"/>
</dbReference>
<dbReference type="Bgee" id="ENSRNOG00000020047">
    <property type="expression patterns" value="Expressed in testis and 20 other cell types or tissues"/>
</dbReference>
<dbReference type="GO" id="GO:0005829">
    <property type="term" value="C:cytosol"/>
    <property type="evidence" value="ECO:0007669"/>
    <property type="project" value="Ensembl"/>
</dbReference>
<dbReference type="GO" id="GO:0005847">
    <property type="term" value="C:mRNA cleavage and polyadenylation specificity factor complex"/>
    <property type="evidence" value="ECO:0000250"/>
    <property type="project" value="UniProtKB"/>
</dbReference>
<dbReference type="GO" id="GO:0016607">
    <property type="term" value="C:nuclear speck"/>
    <property type="evidence" value="ECO:0000250"/>
    <property type="project" value="UniProtKB"/>
</dbReference>
<dbReference type="GO" id="GO:0005730">
    <property type="term" value="C:nucleolus"/>
    <property type="evidence" value="ECO:0000250"/>
    <property type="project" value="UniProtKB"/>
</dbReference>
<dbReference type="GO" id="GO:0005654">
    <property type="term" value="C:nucleoplasm"/>
    <property type="evidence" value="ECO:0000266"/>
    <property type="project" value="RGD"/>
</dbReference>
<dbReference type="GO" id="GO:0005524">
    <property type="term" value="F:ATP binding"/>
    <property type="evidence" value="ECO:0007669"/>
    <property type="project" value="UniProtKB-KW"/>
</dbReference>
<dbReference type="GO" id="GO:0019899">
    <property type="term" value="F:enzyme binding"/>
    <property type="evidence" value="ECO:0000266"/>
    <property type="project" value="RGD"/>
</dbReference>
<dbReference type="GO" id="GO:0140767">
    <property type="term" value="F:enzyme-substrate adaptor activity"/>
    <property type="evidence" value="ECO:0000250"/>
    <property type="project" value="UniProtKB"/>
</dbReference>
<dbReference type="GO" id="GO:0003730">
    <property type="term" value="F:mRNA 3'-UTR binding"/>
    <property type="evidence" value="ECO:0000250"/>
    <property type="project" value="UniProtKB"/>
</dbReference>
<dbReference type="GO" id="GO:1990817">
    <property type="term" value="F:poly(A) RNA polymerase activity"/>
    <property type="evidence" value="ECO:0000250"/>
    <property type="project" value="UniProtKB"/>
</dbReference>
<dbReference type="GO" id="GO:0003723">
    <property type="term" value="F:RNA binding"/>
    <property type="evidence" value="ECO:0000250"/>
    <property type="project" value="UniProtKB"/>
</dbReference>
<dbReference type="GO" id="GO:0050265">
    <property type="term" value="F:RNA uridylyltransferase activity"/>
    <property type="evidence" value="ECO:0000250"/>
    <property type="project" value="UniProtKB"/>
</dbReference>
<dbReference type="GO" id="GO:0017070">
    <property type="term" value="F:U6 snRNA binding"/>
    <property type="evidence" value="ECO:0000250"/>
    <property type="project" value="UniProtKB"/>
</dbReference>
<dbReference type="GO" id="GO:0008270">
    <property type="term" value="F:zinc ion binding"/>
    <property type="evidence" value="ECO:0007669"/>
    <property type="project" value="UniProtKB-KW"/>
</dbReference>
<dbReference type="GO" id="GO:0180010">
    <property type="term" value="P:co-transcriptional mRNA 3'-end processing, cleavage and polyadenylation pathway"/>
    <property type="evidence" value="ECO:0000250"/>
    <property type="project" value="UniProtKB"/>
</dbReference>
<dbReference type="GO" id="GO:0031124">
    <property type="term" value="P:mRNA 3'-end processing"/>
    <property type="evidence" value="ECO:0000266"/>
    <property type="project" value="RGD"/>
</dbReference>
<dbReference type="GO" id="GO:0051252">
    <property type="term" value="P:regulation of RNA metabolic process"/>
    <property type="evidence" value="ECO:0007669"/>
    <property type="project" value="Ensembl"/>
</dbReference>
<dbReference type="GO" id="GO:0031123">
    <property type="term" value="P:RNA 3'-end processing"/>
    <property type="evidence" value="ECO:0000318"/>
    <property type="project" value="GO_Central"/>
</dbReference>
<dbReference type="GO" id="GO:0016180">
    <property type="term" value="P:snRNA processing"/>
    <property type="evidence" value="ECO:0000250"/>
    <property type="project" value="UniProtKB"/>
</dbReference>
<dbReference type="GO" id="GO:0034477">
    <property type="term" value="P:U6 snRNA 3'-end processing"/>
    <property type="evidence" value="ECO:0000250"/>
    <property type="project" value="UniProtKB"/>
</dbReference>
<dbReference type="CDD" id="cd05402">
    <property type="entry name" value="NT_PAP_TUTase"/>
    <property type="match status" value="1"/>
</dbReference>
<dbReference type="CDD" id="cd12279">
    <property type="entry name" value="RRM_TUT1"/>
    <property type="match status" value="1"/>
</dbReference>
<dbReference type="FunFam" id="1.10.1410.10:FF:000008">
    <property type="entry name" value="speckle targeted PIP5K1A-regulated poly(A) polymerase"/>
    <property type="match status" value="1"/>
</dbReference>
<dbReference type="FunFam" id="3.30.70.330:FF:000305">
    <property type="entry name" value="speckle targeted PIP5K1A-regulated poly(A) polymerase"/>
    <property type="match status" value="1"/>
</dbReference>
<dbReference type="Gene3D" id="1.10.1410.10">
    <property type="match status" value="1"/>
</dbReference>
<dbReference type="Gene3D" id="3.30.70.330">
    <property type="match status" value="1"/>
</dbReference>
<dbReference type="Gene3D" id="3.30.460.10">
    <property type="entry name" value="Beta Polymerase, domain 2"/>
    <property type="match status" value="2"/>
</dbReference>
<dbReference type="InterPro" id="IPR003604">
    <property type="entry name" value="Matrin/U1-like-C_Znf_C2H2"/>
</dbReference>
<dbReference type="InterPro" id="IPR054708">
    <property type="entry name" value="MTPAP-like_central"/>
</dbReference>
<dbReference type="InterPro" id="IPR043519">
    <property type="entry name" value="NT_sf"/>
</dbReference>
<dbReference type="InterPro" id="IPR012677">
    <property type="entry name" value="Nucleotide-bd_a/b_plait_sf"/>
</dbReference>
<dbReference type="InterPro" id="IPR002058">
    <property type="entry name" value="PAP_assoc"/>
</dbReference>
<dbReference type="InterPro" id="IPR035979">
    <property type="entry name" value="RBD_domain_sf"/>
</dbReference>
<dbReference type="InterPro" id="IPR000504">
    <property type="entry name" value="RRM_dom"/>
</dbReference>
<dbReference type="InterPro" id="IPR034388">
    <property type="entry name" value="Star-PAP_RRM"/>
</dbReference>
<dbReference type="InterPro" id="IPR036236">
    <property type="entry name" value="Znf_C2H2_sf"/>
</dbReference>
<dbReference type="InterPro" id="IPR013087">
    <property type="entry name" value="Znf_C2H2_type"/>
</dbReference>
<dbReference type="PANTHER" id="PTHR12271">
    <property type="entry name" value="POLY A POLYMERASE CID PAP -RELATED"/>
    <property type="match status" value="1"/>
</dbReference>
<dbReference type="PANTHER" id="PTHR12271:SF127">
    <property type="entry name" value="SPECKLE TARGETED PIP5K1A-REGULATED POLY(A) POLYMERASE"/>
    <property type="match status" value="1"/>
</dbReference>
<dbReference type="Pfam" id="PF22600">
    <property type="entry name" value="MTPAP-like_central"/>
    <property type="match status" value="2"/>
</dbReference>
<dbReference type="Pfam" id="PF03828">
    <property type="entry name" value="PAP_assoc"/>
    <property type="match status" value="1"/>
</dbReference>
<dbReference type="Pfam" id="PF00076">
    <property type="entry name" value="RRM_1"/>
    <property type="match status" value="1"/>
</dbReference>
<dbReference type="Pfam" id="PF12874">
    <property type="entry name" value="zf-met"/>
    <property type="match status" value="1"/>
</dbReference>
<dbReference type="SMART" id="SM00360">
    <property type="entry name" value="RRM"/>
    <property type="match status" value="1"/>
</dbReference>
<dbReference type="SMART" id="SM00451">
    <property type="entry name" value="ZnF_U1"/>
    <property type="match status" value="1"/>
</dbReference>
<dbReference type="SUPFAM" id="SSF57667">
    <property type="entry name" value="beta-beta-alpha zinc fingers"/>
    <property type="match status" value="1"/>
</dbReference>
<dbReference type="SUPFAM" id="SSF81301">
    <property type="entry name" value="Nucleotidyltransferase"/>
    <property type="match status" value="1"/>
</dbReference>
<dbReference type="SUPFAM" id="SSF81631">
    <property type="entry name" value="PAP/OAS1 substrate-binding domain"/>
    <property type="match status" value="1"/>
</dbReference>
<dbReference type="SUPFAM" id="SSF54928">
    <property type="entry name" value="RNA-binding domain, RBD"/>
    <property type="match status" value="1"/>
</dbReference>
<dbReference type="PROSITE" id="PS50102">
    <property type="entry name" value="RRM"/>
    <property type="match status" value="1"/>
</dbReference>
<organism>
    <name type="scientific">Rattus norvegicus</name>
    <name type="common">Rat</name>
    <dbReference type="NCBI Taxonomy" id="10116"/>
    <lineage>
        <taxon>Eukaryota</taxon>
        <taxon>Metazoa</taxon>
        <taxon>Chordata</taxon>
        <taxon>Craniata</taxon>
        <taxon>Vertebrata</taxon>
        <taxon>Euteleostomi</taxon>
        <taxon>Mammalia</taxon>
        <taxon>Eutheria</taxon>
        <taxon>Euarchontoglires</taxon>
        <taxon>Glires</taxon>
        <taxon>Rodentia</taxon>
        <taxon>Myomorpha</taxon>
        <taxon>Muroidea</taxon>
        <taxon>Muridae</taxon>
        <taxon>Murinae</taxon>
        <taxon>Rattus</taxon>
    </lineage>
</organism>
<sequence>MAAVDSDVVSLPRGRFRCCLCDVTTANRPSLDAHLKGRKHRDLVQLRATRKAQGLRSVFVSGFPRDVGSAQLSEYFQTFGPVANIVMDKDKGVFAIVEMGDISAREAVLSQPKHSLGGHTLRVRPREQKEFQSPASKSPKGVDSNSHQLAQALAEAADVGAQMVKLVELRELSEAERQLRTLVVALMQEVFTEFFPGCVVHPFGSSVNSFDVHGCDLDLFLDLGDMEEPQPDPQTPKLPEASSLDSTLASSLDPQVLACTPASLDSLSPTSLQDSEALDFETPSSLAPQTPDSALGSDTVTSPQSLPPVSPLEEDRGEGKHRKELELAEASKDEKEEATAVLELVGSILRGCVPGVYRVQTVPSARRPVVKFCHRPSGLHGDISLSNRLALYNSRFLNLCSEMDSRVRPLVYTLRCWAQHNGLSGGGPLLNNYALTLLVIYFLQTRDPPVLPTVAQLTQRSGEGEQVEVDGWDCSFPKDASRLEPSTNVEPLSSLLAQFFSCVSCWDLSGSLLSLREGQALMVAGGLPSDLWEGLRLGPMNLQDPFDLSHNVAANVTSRVAKRLQSSCGAAASYCRSLQYQQRSSRGRDWGLLPLLQPSSPSSLLSAKLIPLPSAPFPQIITALVSVLREALGCHIEQGTKRRRSEGARSKDSPLGGANKRPRLSGQEKSCEEGKEEPQGCAGDHSENEVEEMVIELRETPQDWALLHCGPPGELPLMTAKCLDKTAEQNPMEPEGAGEGSPGETEKEASHPSSVSWRCALWHQIWQGRRRARRRFQQQTKEEGRGGPSTGAEWLAVEARVTQELKGPKSEQQRLQGEPLLTFVASASQAEQTLTVAPLQDPQGLFPGLHHFLQVFIPQALKNLLK</sequence>
<gene>
    <name type="primary">Tut1</name>
    <name type="synonym">Rbm21</name>
</gene>
<evidence type="ECO:0000250" key="1">
    <source>
        <dbReference type="UniProtKB" id="Q8R3F9"/>
    </source>
</evidence>
<evidence type="ECO:0000250" key="2">
    <source>
        <dbReference type="UniProtKB" id="Q9H6E5"/>
    </source>
</evidence>
<evidence type="ECO:0000250" key="3">
    <source>
        <dbReference type="UniProtKB" id="Q9NVV4"/>
    </source>
</evidence>
<evidence type="ECO:0000255" key="4"/>
<evidence type="ECO:0000255" key="5">
    <source>
        <dbReference type="PROSITE-ProRule" id="PRU00130"/>
    </source>
</evidence>
<evidence type="ECO:0000255" key="6">
    <source>
        <dbReference type="PROSITE-ProRule" id="PRU00176"/>
    </source>
</evidence>
<evidence type="ECO:0000256" key="7">
    <source>
        <dbReference type="SAM" id="MobiDB-lite"/>
    </source>
</evidence>
<evidence type="ECO:0000305" key="8"/>
<evidence type="ECO:0007744" key="9">
    <source>
    </source>
</evidence>
<keyword id="KW-0067">ATP-binding</keyword>
<keyword id="KW-0460">Magnesium</keyword>
<keyword id="KW-0464">Manganese</keyword>
<keyword id="KW-0479">Metal-binding</keyword>
<keyword id="KW-0507">mRNA processing</keyword>
<keyword id="KW-0547">Nucleotide-binding</keyword>
<keyword id="KW-0548">Nucleotidyltransferase</keyword>
<keyword id="KW-0539">Nucleus</keyword>
<keyword id="KW-0597">Phosphoprotein</keyword>
<keyword id="KW-1185">Reference proteome</keyword>
<keyword id="KW-0694">RNA-binding</keyword>
<keyword id="KW-0808">Transferase</keyword>
<keyword id="KW-0862">Zinc</keyword>
<keyword id="KW-0863">Zinc-finger</keyword>
<reference key="1">
    <citation type="journal article" date="2004" name="Genome Res.">
        <title>The status, quality, and expansion of the NIH full-length cDNA project: the Mammalian Gene Collection (MGC).</title>
        <authorList>
            <consortium name="The MGC Project Team"/>
        </authorList>
    </citation>
    <scope>NUCLEOTIDE SEQUENCE [LARGE SCALE MRNA]</scope>
    <source>
        <tissue>Testis</tissue>
    </source>
</reference>
<reference key="2">
    <citation type="journal article" date="2012" name="Nat. Commun.">
        <title>Quantitative maps of protein phosphorylation sites across 14 different rat organs and tissues.</title>
        <authorList>
            <person name="Lundby A."/>
            <person name="Secher A."/>
            <person name="Lage K."/>
            <person name="Nordsborg N.B."/>
            <person name="Dmytriyev A."/>
            <person name="Lundby C."/>
            <person name="Olsen J.V."/>
        </authorList>
    </citation>
    <scope>PHOSPHORYLATION [LARGE SCALE ANALYSIS] AT SER-741</scope>
    <scope>IDENTIFICATION BY MASS SPECTROMETRY [LARGE SCALE ANALYSIS]</scope>
</reference>
<proteinExistence type="evidence at protein level"/>
<feature type="chain" id="PRO_0000254188" description="Speckle targeted PIP5K1A-regulated poly(A) polymerase">
    <location>
        <begin position="1"/>
        <end position="866"/>
    </location>
</feature>
<feature type="domain" description="RRM" evidence="6">
    <location>
        <begin position="56"/>
        <end position="128"/>
    </location>
</feature>
<feature type="domain" description="PAP-associated" evidence="4">
    <location>
        <begin position="492"/>
        <end position="550"/>
    </location>
</feature>
<feature type="zinc finger region" description="Matrin-type" evidence="5">
    <location>
        <begin position="16"/>
        <end position="46"/>
    </location>
</feature>
<feature type="region of interest" description="Disordered" evidence="7">
    <location>
        <begin position="116"/>
        <end position="147"/>
    </location>
</feature>
<feature type="region of interest" description="Disordered" evidence="7">
    <location>
        <begin position="223"/>
        <end position="249"/>
    </location>
</feature>
<feature type="region of interest" description="Disordered" evidence="7">
    <location>
        <begin position="267"/>
        <end position="321"/>
    </location>
</feature>
<feature type="region of interest" description="KA1; binds the bulging loops of U6 snRNA but is dispensable for terminal uridylyltransferase activity" evidence="2">
    <location>
        <begin position="599"/>
        <end position="866"/>
    </location>
</feature>
<feature type="region of interest" description="Disordered" evidence="7">
    <location>
        <begin position="638"/>
        <end position="687"/>
    </location>
</feature>
<feature type="region of interest" description="Disordered" evidence="7">
    <location>
        <begin position="728"/>
        <end position="755"/>
    </location>
</feature>
<feature type="region of interest" description="Disordered" evidence="7">
    <location>
        <begin position="773"/>
        <end position="792"/>
    </location>
</feature>
<feature type="compositionally biased region" description="Polar residues" evidence="7">
    <location>
        <begin position="282"/>
        <end position="304"/>
    </location>
</feature>
<feature type="compositionally biased region" description="Basic and acidic residues" evidence="7">
    <location>
        <begin position="669"/>
        <end position="687"/>
    </location>
</feature>
<feature type="binding site" evidence="2">
    <location>
        <position position="205"/>
    </location>
    <ligand>
        <name>ATP</name>
        <dbReference type="ChEBI" id="CHEBI:30616"/>
    </ligand>
</feature>
<feature type="binding site" evidence="2">
    <location>
        <position position="216"/>
    </location>
    <ligand>
        <name>Mg(2+)</name>
        <dbReference type="ChEBI" id="CHEBI:18420"/>
        <note>catalytic</note>
    </ligand>
</feature>
<feature type="binding site" evidence="2">
    <location>
        <position position="216"/>
    </location>
    <ligand>
        <name>UTP</name>
        <dbReference type="ChEBI" id="CHEBI:46398"/>
    </ligand>
</feature>
<feature type="binding site" evidence="2">
    <location>
        <position position="218"/>
    </location>
    <ligand>
        <name>Mg(2+)</name>
        <dbReference type="ChEBI" id="CHEBI:18420"/>
        <note>catalytic</note>
    </ligand>
</feature>
<feature type="binding site" evidence="2">
    <location>
        <position position="218"/>
    </location>
    <ligand>
        <name>UTP</name>
        <dbReference type="ChEBI" id="CHEBI:46398"/>
    </ligand>
</feature>
<feature type="binding site" evidence="2">
    <location>
        <position position="393"/>
    </location>
    <ligand>
        <name>ATP</name>
        <dbReference type="ChEBI" id="CHEBI:30616"/>
    </ligand>
</feature>
<feature type="binding site" evidence="2">
    <location>
        <position position="393"/>
    </location>
    <ligand>
        <name>UTP</name>
        <dbReference type="ChEBI" id="CHEBI:46398"/>
    </ligand>
</feature>
<feature type="binding site" evidence="2">
    <location>
        <position position="415"/>
    </location>
    <ligand>
        <name>UTP</name>
        <dbReference type="ChEBI" id="CHEBI:46398"/>
    </ligand>
</feature>
<feature type="binding site" evidence="2">
    <location>
        <position position="433"/>
    </location>
    <ligand>
        <name>UTP</name>
        <dbReference type="ChEBI" id="CHEBI:46398"/>
    </ligand>
</feature>
<feature type="binding site" evidence="2">
    <location>
        <position position="550"/>
    </location>
    <ligand>
        <name>UTP</name>
        <dbReference type="ChEBI" id="CHEBI:46398"/>
    </ligand>
</feature>
<feature type="modified residue" description="Phosphoserine" evidence="1">
    <location>
        <position position="686"/>
    </location>
</feature>
<feature type="modified residue" description="Phosphoserine" evidence="9">
    <location>
        <position position="741"/>
    </location>
</feature>